<organism>
    <name type="scientific">Mycobacterium bovis (strain BCG / Pasteur 1173P2)</name>
    <dbReference type="NCBI Taxonomy" id="410289"/>
    <lineage>
        <taxon>Bacteria</taxon>
        <taxon>Bacillati</taxon>
        <taxon>Actinomycetota</taxon>
        <taxon>Actinomycetes</taxon>
        <taxon>Mycobacteriales</taxon>
        <taxon>Mycobacteriaceae</taxon>
        <taxon>Mycobacterium</taxon>
        <taxon>Mycobacterium tuberculosis complex</taxon>
    </lineage>
</organism>
<keyword id="KW-0028">Amino-acid biosynthesis</keyword>
<keyword id="KW-0479">Metal-binding</keyword>
<keyword id="KW-0486">Methionine biosynthesis</keyword>
<keyword id="KW-0489">Methyltransferase</keyword>
<keyword id="KW-0677">Repeat</keyword>
<keyword id="KW-0808">Transferase</keyword>
<keyword id="KW-0862">Zinc</keyword>
<name>METE_MYCBP</name>
<accession>A1KHS4</accession>
<comment type="function">
    <text evidence="1">Catalyzes the transfer of a methyl group from 5-methyltetrahydrofolate to homocysteine resulting in methionine formation.</text>
</comment>
<comment type="catalytic activity">
    <reaction evidence="1">
        <text>5-methyltetrahydropteroyltri-L-glutamate + L-homocysteine = tetrahydropteroyltri-L-glutamate + L-methionine</text>
        <dbReference type="Rhea" id="RHEA:21196"/>
        <dbReference type="ChEBI" id="CHEBI:57844"/>
        <dbReference type="ChEBI" id="CHEBI:58140"/>
        <dbReference type="ChEBI" id="CHEBI:58199"/>
        <dbReference type="ChEBI" id="CHEBI:58207"/>
        <dbReference type="EC" id="2.1.1.14"/>
    </reaction>
</comment>
<comment type="cofactor">
    <cofactor evidence="1">
        <name>Zn(2+)</name>
        <dbReference type="ChEBI" id="CHEBI:29105"/>
    </cofactor>
    <text evidence="1">Binds 1 zinc ion per subunit.</text>
</comment>
<comment type="pathway">
    <text evidence="1">Amino-acid biosynthesis; L-methionine biosynthesis via de novo pathway; L-methionine from L-homocysteine (MetE route): step 1/1.</text>
</comment>
<comment type="similarity">
    <text evidence="1">Belongs to the vitamin-B12 independent methionine synthase family.</text>
</comment>
<sequence length="759" mass="81582">MTQPVRRQPFTATITGSPRIGPRRELKRATEGYWAGRTSRSELEAVAATLRRDTWSALAAAGLDSVPVNTFSYYDQMLDTAVLLGALPPRVSPVSDGLDRYFAAARGTDQIAPLEMTKWFDTNYHYLVPEIGPSTTFTLHPGKVLAELKEALGQGIPARPVIIGPITFLLLSKAVDGAGAPIERLEELVPVYSELLSLLADGGAQWVQFDEPALVTDLSPDAPALAEAVYTALCSVSNRPAIYVATYFGDPGAALPALARTPVEAIGVDLVAGADTSVAGVPELAGKTLVAGVVDGRNVWRTDLEAALGTLATLLGSAATVAVSTSCSTLHVPYSLEPETDLDDALRSWLAFGAEKVREVVVLARALRDGHDAVADEIASSRAAIASRKRDPRLHNGQIRARIEAIVASGAHRGNAAQRRASQDARLHLPPLPTTTIGSYPQTSAIRVARAALRAGEIDEAEYVRRMRQEITEVIALQERLGLDVLVHGEPERNDMVQYFAEQLAGFFATQNGWVQSYGSRCVRPPILYGDVSRPRAMTVEWITYAQSLTDKPVKGMLTGPVTILAWSFVRDDQPLADTANQVALAIRDETVDLQSAGIAVIQVDEPALRELLPLRRADQAEYLRWAVGAFRLATSGVSDATQIHTHLCYSEFGEVIGAIADLDADVTSIEAARSHMEVLDDLNAIGFANGVGPGVYDIHSPRVPSAEEMADSLRAALRAVPAERLWVNPDCGLKTRNVDEVTASLHNMVAAAREVRAG</sequence>
<dbReference type="EC" id="2.1.1.14" evidence="1"/>
<dbReference type="EMBL" id="AM408590">
    <property type="protein sequence ID" value="CAL71181.1"/>
    <property type="molecule type" value="Genomic_DNA"/>
</dbReference>
<dbReference type="RefSeq" id="WP_003405914.1">
    <property type="nucleotide sequence ID" value="NC_008769.1"/>
</dbReference>
<dbReference type="SMR" id="A1KHS4"/>
<dbReference type="KEGG" id="mbb:BCG_1194c"/>
<dbReference type="HOGENOM" id="CLU_013175_0_0_11"/>
<dbReference type="UniPathway" id="UPA00051">
    <property type="reaction ID" value="UER00082"/>
</dbReference>
<dbReference type="Proteomes" id="UP000001472">
    <property type="component" value="Chromosome"/>
</dbReference>
<dbReference type="GO" id="GO:0003871">
    <property type="term" value="F:5-methyltetrahydropteroyltriglutamate-homocysteine S-methyltransferase activity"/>
    <property type="evidence" value="ECO:0007669"/>
    <property type="project" value="UniProtKB-UniRule"/>
</dbReference>
<dbReference type="GO" id="GO:0008270">
    <property type="term" value="F:zinc ion binding"/>
    <property type="evidence" value="ECO:0007669"/>
    <property type="project" value="InterPro"/>
</dbReference>
<dbReference type="GO" id="GO:0009086">
    <property type="term" value="P:methionine biosynthetic process"/>
    <property type="evidence" value="ECO:0007669"/>
    <property type="project" value="UniProtKB-UniRule"/>
</dbReference>
<dbReference type="GO" id="GO:0032259">
    <property type="term" value="P:methylation"/>
    <property type="evidence" value="ECO:0007669"/>
    <property type="project" value="UniProtKB-KW"/>
</dbReference>
<dbReference type="CDD" id="cd03311">
    <property type="entry name" value="CIMS_C_terminal_like"/>
    <property type="match status" value="1"/>
</dbReference>
<dbReference type="CDD" id="cd03312">
    <property type="entry name" value="CIMS_N_terminal_like"/>
    <property type="match status" value="1"/>
</dbReference>
<dbReference type="Gene3D" id="3.20.20.210">
    <property type="match status" value="2"/>
</dbReference>
<dbReference type="HAMAP" id="MF_00172">
    <property type="entry name" value="Meth_synth"/>
    <property type="match status" value="1"/>
</dbReference>
<dbReference type="InterPro" id="IPR013215">
    <property type="entry name" value="Cbl-indep_Met_Synth_N"/>
</dbReference>
<dbReference type="InterPro" id="IPR006276">
    <property type="entry name" value="Cobalamin-indep_Met_synthase"/>
</dbReference>
<dbReference type="InterPro" id="IPR002629">
    <property type="entry name" value="Met_Synth_C/arc"/>
</dbReference>
<dbReference type="InterPro" id="IPR038071">
    <property type="entry name" value="UROD/MetE-like_sf"/>
</dbReference>
<dbReference type="NCBIfam" id="TIGR01371">
    <property type="entry name" value="met_syn_B12ind"/>
    <property type="match status" value="1"/>
</dbReference>
<dbReference type="NCBIfam" id="NF003556">
    <property type="entry name" value="PRK05222.1"/>
    <property type="match status" value="1"/>
</dbReference>
<dbReference type="PANTHER" id="PTHR30519">
    <property type="entry name" value="5-METHYLTETRAHYDROPTEROYLTRIGLUTAMATE--HOMOCYSTEINE METHYLTRANSFERASE"/>
    <property type="match status" value="1"/>
</dbReference>
<dbReference type="Pfam" id="PF08267">
    <property type="entry name" value="Meth_synt_1"/>
    <property type="match status" value="1"/>
</dbReference>
<dbReference type="Pfam" id="PF01717">
    <property type="entry name" value="Meth_synt_2"/>
    <property type="match status" value="1"/>
</dbReference>
<dbReference type="PIRSF" id="PIRSF000382">
    <property type="entry name" value="MeTrfase_B12_ind"/>
    <property type="match status" value="1"/>
</dbReference>
<dbReference type="SUPFAM" id="SSF51726">
    <property type="entry name" value="UROD/MetE-like"/>
    <property type="match status" value="2"/>
</dbReference>
<gene>
    <name evidence="1" type="primary">metE</name>
    <name type="ordered locus">BCG_1194c</name>
</gene>
<protein>
    <recommendedName>
        <fullName evidence="1">5-methyltetrahydropteroyltriglutamate--homocysteine methyltransferase</fullName>
        <ecNumber evidence="1">2.1.1.14</ecNumber>
    </recommendedName>
    <alternativeName>
        <fullName evidence="1">Cobalamin-independent methionine synthase</fullName>
    </alternativeName>
    <alternativeName>
        <fullName evidence="1">Methionine synthase, vitamin-B12 independent isozyme</fullName>
    </alternativeName>
</protein>
<feature type="chain" id="PRO_1000017255" description="5-methyltetrahydropteroyltriglutamate--homocysteine methyltransferase">
    <location>
        <begin position="1"/>
        <end position="759"/>
    </location>
</feature>
<feature type="region of interest" description="Disordered" evidence="2">
    <location>
        <begin position="1"/>
        <end position="22"/>
    </location>
</feature>
<feature type="compositionally biased region" description="Polar residues" evidence="2">
    <location>
        <begin position="1"/>
        <end position="16"/>
    </location>
</feature>
<feature type="active site" description="Proton donor" evidence="1">
    <location>
        <position position="700"/>
    </location>
</feature>
<feature type="binding site" evidence="1">
    <location>
        <begin position="24"/>
        <end position="27"/>
    </location>
    <ligand>
        <name>5-methyltetrahydropteroyltri-L-glutamate</name>
        <dbReference type="ChEBI" id="CHEBI:58207"/>
    </ligand>
</feature>
<feature type="binding site" evidence="1">
    <location>
        <position position="118"/>
    </location>
    <ligand>
        <name>5-methyltetrahydropteroyltri-L-glutamate</name>
        <dbReference type="ChEBI" id="CHEBI:58207"/>
    </ligand>
</feature>
<feature type="binding site" evidence="1">
    <location>
        <begin position="437"/>
        <end position="439"/>
    </location>
    <ligand>
        <name>L-homocysteine</name>
        <dbReference type="ChEBI" id="CHEBI:58199"/>
    </ligand>
</feature>
<feature type="binding site" evidence="1">
    <location>
        <begin position="437"/>
        <end position="439"/>
    </location>
    <ligand>
        <name>L-methionine</name>
        <dbReference type="ChEBI" id="CHEBI:57844"/>
    </ligand>
</feature>
<feature type="binding site" evidence="1">
    <location>
        <position position="490"/>
    </location>
    <ligand>
        <name>L-homocysteine</name>
        <dbReference type="ChEBI" id="CHEBI:58199"/>
    </ligand>
</feature>
<feature type="binding site" evidence="1">
    <location>
        <position position="490"/>
    </location>
    <ligand>
        <name>L-methionine</name>
        <dbReference type="ChEBI" id="CHEBI:57844"/>
    </ligand>
</feature>
<feature type="binding site" evidence="1">
    <location>
        <begin position="521"/>
        <end position="522"/>
    </location>
    <ligand>
        <name>5-methyltetrahydropteroyltri-L-glutamate</name>
        <dbReference type="ChEBI" id="CHEBI:58207"/>
    </ligand>
</feature>
<feature type="binding site" evidence="1">
    <location>
        <position position="567"/>
    </location>
    <ligand>
        <name>5-methyltetrahydropteroyltri-L-glutamate</name>
        <dbReference type="ChEBI" id="CHEBI:58207"/>
    </ligand>
</feature>
<feature type="binding site" evidence="1">
    <location>
        <position position="605"/>
    </location>
    <ligand>
        <name>L-homocysteine</name>
        <dbReference type="ChEBI" id="CHEBI:58199"/>
    </ligand>
</feature>
<feature type="binding site" evidence="1">
    <location>
        <position position="605"/>
    </location>
    <ligand>
        <name>L-methionine</name>
        <dbReference type="ChEBI" id="CHEBI:57844"/>
    </ligand>
</feature>
<feature type="binding site" evidence="1">
    <location>
        <position position="611"/>
    </location>
    <ligand>
        <name>5-methyltetrahydropteroyltri-L-glutamate</name>
        <dbReference type="ChEBI" id="CHEBI:58207"/>
    </ligand>
</feature>
<feature type="binding site" evidence="1">
    <location>
        <position position="647"/>
    </location>
    <ligand>
        <name>Zn(2+)</name>
        <dbReference type="ChEBI" id="CHEBI:29105"/>
        <note>catalytic</note>
    </ligand>
</feature>
<feature type="binding site" evidence="1">
    <location>
        <position position="649"/>
    </location>
    <ligand>
        <name>Zn(2+)</name>
        <dbReference type="ChEBI" id="CHEBI:29105"/>
        <note>catalytic</note>
    </ligand>
</feature>
<feature type="binding site" evidence="1">
    <location>
        <position position="671"/>
    </location>
    <ligand>
        <name>Zn(2+)</name>
        <dbReference type="ChEBI" id="CHEBI:29105"/>
        <note>catalytic</note>
    </ligand>
</feature>
<feature type="binding site" evidence="1">
    <location>
        <position position="732"/>
    </location>
    <ligand>
        <name>Zn(2+)</name>
        <dbReference type="ChEBI" id="CHEBI:29105"/>
        <note>catalytic</note>
    </ligand>
</feature>
<proteinExistence type="inferred from homology"/>
<evidence type="ECO:0000255" key="1">
    <source>
        <dbReference type="HAMAP-Rule" id="MF_00172"/>
    </source>
</evidence>
<evidence type="ECO:0000256" key="2">
    <source>
        <dbReference type="SAM" id="MobiDB-lite"/>
    </source>
</evidence>
<reference key="1">
    <citation type="journal article" date="2007" name="Proc. Natl. Acad. Sci. U.S.A.">
        <title>Genome plasticity of BCG and impact on vaccine efficacy.</title>
        <authorList>
            <person name="Brosch R."/>
            <person name="Gordon S.V."/>
            <person name="Garnier T."/>
            <person name="Eiglmeier K."/>
            <person name="Frigui W."/>
            <person name="Valenti P."/>
            <person name="Dos Santos S."/>
            <person name="Duthoy S."/>
            <person name="Lacroix C."/>
            <person name="Garcia-Pelayo C."/>
            <person name="Inwald J.K."/>
            <person name="Golby P."/>
            <person name="Garcia J.N."/>
            <person name="Hewinson R.G."/>
            <person name="Behr M.A."/>
            <person name="Quail M.A."/>
            <person name="Churcher C."/>
            <person name="Barrell B.G."/>
            <person name="Parkhill J."/>
            <person name="Cole S.T."/>
        </authorList>
    </citation>
    <scope>NUCLEOTIDE SEQUENCE [LARGE SCALE GENOMIC DNA]</scope>
    <source>
        <strain>BCG / Pasteur 1173P2</strain>
    </source>
</reference>